<proteinExistence type="inferred from homology"/>
<comment type="function">
    <text evidence="1">This protein is one of the two subunits of integration host factor, a specific DNA-binding protein that functions in genetic recombination as well as in transcriptional and translational control.</text>
</comment>
<comment type="subunit">
    <text evidence="1">Heterodimer of an alpha and a beta chain.</text>
</comment>
<comment type="similarity">
    <text evidence="1">Belongs to the bacterial histone-like protein family.</text>
</comment>
<evidence type="ECO:0000255" key="1">
    <source>
        <dbReference type="HAMAP-Rule" id="MF_00380"/>
    </source>
</evidence>
<evidence type="ECO:0000256" key="2">
    <source>
        <dbReference type="SAM" id="MobiDB-lite"/>
    </source>
</evidence>
<organism>
    <name type="scientific">Salmonella schwarzengrund (strain CVM19633)</name>
    <dbReference type="NCBI Taxonomy" id="439843"/>
    <lineage>
        <taxon>Bacteria</taxon>
        <taxon>Pseudomonadati</taxon>
        <taxon>Pseudomonadota</taxon>
        <taxon>Gammaproteobacteria</taxon>
        <taxon>Enterobacterales</taxon>
        <taxon>Enterobacteriaceae</taxon>
        <taxon>Salmonella</taxon>
    </lineage>
</organism>
<gene>
    <name evidence="1" type="primary">ihfA</name>
    <name evidence="1" type="synonym">himA</name>
    <name type="ordered locus">SeSA_A1434</name>
</gene>
<dbReference type="EMBL" id="CP001127">
    <property type="protein sequence ID" value="ACF91324.1"/>
    <property type="molecule type" value="Genomic_DNA"/>
</dbReference>
<dbReference type="RefSeq" id="WP_001229266.1">
    <property type="nucleotide sequence ID" value="NC_011094.1"/>
</dbReference>
<dbReference type="SMR" id="B4TUF6"/>
<dbReference type="GeneID" id="92828695"/>
<dbReference type="KEGG" id="sew:SeSA_A1434"/>
<dbReference type="HOGENOM" id="CLU_105066_1_3_6"/>
<dbReference type="Proteomes" id="UP000001865">
    <property type="component" value="Chromosome"/>
</dbReference>
<dbReference type="GO" id="GO:0005829">
    <property type="term" value="C:cytosol"/>
    <property type="evidence" value="ECO:0007669"/>
    <property type="project" value="TreeGrafter"/>
</dbReference>
<dbReference type="GO" id="GO:0003677">
    <property type="term" value="F:DNA binding"/>
    <property type="evidence" value="ECO:0007669"/>
    <property type="project" value="UniProtKB-UniRule"/>
</dbReference>
<dbReference type="GO" id="GO:0030527">
    <property type="term" value="F:structural constituent of chromatin"/>
    <property type="evidence" value="ECO:0007669"/>
    <property type="project" value="InterPro"/>
</dbReference>
<dbReference type="GO" id="GO:0006310">
    <property type="term" value="P:DNA recombination"/>
    <property type="evidence" value="ECO:0007669"/>
    <property type="project" value="UniProtKB-UniRule"/>
</dbReference>
<dbReference type="GO" id="GO:0009893">
    <property type="term" value="P:positive regulation of metabolic process"/>
    <property type="evidence" value="ECO:0007669"/>
    <property type="project" value="UniProtKB-ARBA"/>
</dbReference>
<dbReference type="GO" id="GO:0006355">
    <property type="term" value="P:regulation of DNA-templated transcription"/>
    <property type="evidence" value="ECO:0007669"/>
    <property type="project" value="UniProtKB-UniRule"/>
</dbReference>
<dbReference type="GO" id="GO:0006417">
    <property type="term" value="P:regulation of translation"/>
    <property type="evidence" value="ECO:0007669"/>
    <property type="project" value="UniProtKB-UniRule"/>
</dbReference>
<dbReference type="CDD" id="cd13835">
    <property type="entry name" value="IHF_A"/>
    <property type="match status" value="1"/>
</dbReference>
<dbReference type="FunFam" id="4.10.520.10:FF:000002">
    <property type="entry name" value="Integration host factor subunit alpha"/>
    <property type="match status" value="1"/>
</dbReference>
<dbReference type="Gene3D" id="4.10.520.10">
    <property type="entry name" value="IHF-like DNA-binding proteins"/>
    <property type="match status" value="1"/>
</dbReference>
<dbReference type="HAMAP" id="MF_00380">
    <property type="entry name" value="IHF_alpha"/>
    <property type="match status" value="1"/>
</dbReference>
<dbReference type="InterPro" id="IPR000119">
    <property type="entry name" value="Hist_DNA-bd"/>
</dbReference>
<dbReference type="InterPro" id="IPR020816">
    <property type="entry name" value="Histone-like_DNA-bd_CS"/>
</dbReference>
<dbReference type="InterPro" id="IPR010992">
    <property type="entry name" value="IHF-like_DNA-bd_dom_sf"/>
</dbReference>
<dbReference type="InterPro" id="IPR005684">
    <property type="entry name" value="IHF_alpha"/>
</dbReference>
<dbReference type="NCBIfam" id="TIGR00987">
    <property type="entry name" value="himA"/>
    <property type="match status" value="1"/>
</dbReference>
<dbReference type="NCBIfam" id="NF001401">
    <property type="entry name" value="PRK00285.1"/>
    <property type="match status" value="1"/>
</dbReference>
<dbReference type="PANTHER" id="PTHR33175">
    <property type="entry name" value="DNA-BINDING PROTEIN HU"/>
    <property type="match status" value="1"/>
</dbReference>
<dbReference type="PANTHER" id="PTHR33175:SF2">
    <property type="entry name" value="INTEGRATION HOST FACTOR SUBUNIT ALPHA"/>
    <property type="match status" value="1"/>
</dbReference>
<dbReference type="Pfam" id="PF00216">
    <property type="entry name" value="Bac_DNA_binding"/>
    <property type="match status" value="1"/>
</dbReference>
<dbReference type="PRINTS" id="PR01727">
    <property type="entry name" value="DNABINDINGHU"/>
</dbReference>
<dbReference type="SMART" id="SM00411">
    <property type="entry name" value="BHL"/>
    <property type="match status" value="1"/>
</dbReference>
<dbReference type="SUPFAM" id="SSF47729">
    <property type="entry name" value="IHF-like DNA-binding proteins"/>
    <property type="match status" value="1"/>
</dbReference>
<dbReference type="PROSITE" id="PS00045">
    <property type="entry name" value="HISTONE_LIKE"/>
    <property type="match status" value="1"/>
</dbReference>
<protein>
    <recommendedName>
        <fullName evidence="1">Integration host factor subunit alpha</fullName>
        <shortName evidence="1">IHF-alpha</shortName>
    </recommendedName>
</protein>
<feature type="chain" id="PRO_1000122166" description="Integration host factor subunit alpha">
    <location>
        <begin position="1"/>
        <end position="99"/>
    </location>
</feature>
<feature type="region of interest" description="Disordered" evidence="2">
    <location>
        <begin position="49"/>
        <end position="75"/>
    </location>
</feature>
<sequence length="99" mass="11368">MALTKAEMSEYLFDKLGLSKRDAKELVELFFEEIRRALENGEQVKLSGFGNFDLRDKNQRPGRNPKTGEDIPITARRVVTFRPGQKLKSRVENASPKEE</sequence>
<reference key="1">
    <citation type="journal article" date="2011" name="J. Bacteriol.">
        <title>Comparative genomics of 28 Salmonella enterica isolates: evidence for CRISPR-mediated adaptive sublineage evolution.</title>
        <authorList>
            <person name="Fricke W.F."/>
            <person name="Mammel M.K."/>
            <person name="McDermott P.F."/>
            <person name="Tartera C."/>
            <person name="White D.G."/>
            <person name="Leclerc J.E."/>
            <person name="Ravel J."/>
            <person name="Cebula T.A."/>
        </authorList>
    </citation>
    <scope>NUCLEOTIDE SEQUENCE [LARGE SCALE GENOMIC DNA]</scope>
    <source>
        <strain>CVM19633</strain>
    </source>
</reference>
<name>IHFA_SALSV</name>
<keyword id="KW-0233">DNA recombination</keyword>
<keyword id="KW-0238">DNA-binding</keyword>
<keyword id="KW-0804">Transcription</keyword>
<keyword id="KW-0805">Transcription regulation</keyword>
<keyword id="KW-0810">Translation regulation</keyword>
<accession>B4TUF6</accession>